<keyword id="KW-0021">Allosteric enzyme</keyword>
<keyword id="KW-0963">Cytoplasm</keyword>
<keyword id="KW-0378">Hydrolase</keyword>
<keyword id="KW-0479">Metal-binding</keyword>
<keyword id="KW-0645">Protease</keyword>
<keyword id="KW-0915">Sodium</keyword>
<keyword id="KW-0888">Threonine protease</keyword>
<feature type="chain" id="PRO_0000148162" description="ATP-dependent protease subunit HslV">
    <location>
        <begin position="1"/>
        <end position="184"/>
    </location>
</feature>
<feature type="active site" evidence="1">
    <location>
        <position position="12"/>
    </location>
</feature>
<feature type="binding site" evidence="1">
    <location>
        <position position="167"/>
    </location>
    <ligand>
        <name>Na(+)</name>
        <dbReference type="ChEBI" id="CHEBI:29101"/>
    </ligand>
</feature>
<feature type="binding site" evidence="1">
    <location>
        <position position="170"/>
    </location>
    <ligand>
        <name>Na(+)</name>
        <dbReference type="ChEBI" id="CHEBI:29101"/>
    </ligand>
</feature>
<feature type="binding site" evidence="1">
    <location>
        <position position="173"/>
    </location>
    <ligand>
        <name>Na(+)</name>
        <dbReference type="ChEBI" id="CHEBI:29101"/>
    </ligand>
</feature>
<protein>
    <recommendedName>
        <fullName evidence="1">ATP-dependent protease subunit HslV</fullName>
        <ecNumber evidence="1">3.4.25.2</ecNumber>
    </recommendedName>
</protein>
<gene>
    <name evidence="1" type="primary">hslV</name>
    <name type="ordered locus">WD_1189</name>
</gene>
<organism>
    <name type="scientific">Wolbachia pipientis wMel</name>
    <dbReference type="NCBI Taxonomy" id="163164"/>
    <lineage>
        <taxon>Bacteria</taxon>
        <taxon>Pseudomonadati</taxon>
        <taxon>Pseudomonadota</taxon>
        <taxon>Alphaproteobacteria</taxon>
        <taxon>Rickettsiales</taxon>
        <taxon>Anaplasmataceae</taxon>
        <taxon>Wolbachieae</taxon>
        <taxon>Wolbachia</taxon>
    </lineage>
</organism>
<evidence type="ECO:0000255" key="1">
    <source>
        <dbReference type="HAMAP-Rule" id="MF_00248"/>
    </source>
</evidence>
<dbReference type="EC" id="3.4.25.2" evidence="1"/>
<dbReference type="EMBL" id="AE017196">
    <property type="protein sequence ID" value="AAS14835.1"/>
    <property type="molecule type" value="Genomic_DNA"/>
</dbReference>
<dbReference type="RefSeq" id="WP_006280198.1">
    <property type="nucleotide sequence ID" value="NZ_OX384529.1"/>
</dbReference>
<dbReference type="SMR" id="P61479"/>
<dbReference type="MEROPS" id="T01.006"/>
<dbReference type="EnsemblBacteria" id="AAS14835">
    <property type="protein sequence ID" value="AAS14835"/>
    <property type="gene ID" value="WD_1189"/>
</dbReference>
<dbReference type="GeneID" id="70036656"/>
<dbReference type="KEGG" id="wol:WD_1189"/>
<dbReference type="eggNOG" id="COG5405">
    <property type="taxonomic scope" value="Bacteria"/>
</dbReference>
<dbReference type="Proteomes" id="UP000008215">
    <property type="component" value="Chromosome"/>
</dbReference>
<dbReference type="GO" id="GO:0009376">
    <property type="term" value="C:HslUV protease complex"/>
    <property type="evidence" value="ECO:0007669"/>
    <property type="project" value="UniProtKB-UniRule"/>
</dbReference>
<dbReference type="GO" id="GO:0005839">
    <property type="term" value="C:proteasome core complex"/>
    <property type="evidence" value="ECO:0007669"/>
    <property type="project" value="InterPro"/>
</dbReference>
<dbReference type="GO" id="GO:0046872">
    <property type="term" value="F:metal ion binding"/>
    <property type="evidence" value="ECO:0007669"/>
    <property type="project" value="UniProtKB-KW"/>
</dbReference>
<dbReference type="GO" id="GO:0004298">
    <property type="term" value="F:threonine-type endopeptidase activity"/>
    <property type="evidence" value="ECO:0007669"/>
    <property type="project" value="UniProtKB-KW"/>
</dbReference>
<dbReference type="GO" id="GO:0051603">
    <property type="term" value="P:proteolysis involved in protein catabolic process"/>
    <property type="evidence" value="ECO:0007669"/>
    <property type="project" value="InterPro"/>
</dbReference>
<dbReference type="CDD" id="cd01913">
    <property type="entry name" value="protease_HslV"/>
    <property type="match status" value="1"/>
</dbReference>
<dbReference type="FunFam" id="3.60.20.10:FF:000002">
    <property type="entry name" value="ATP-dependent protease subunit HslV"/>
    <property type="match status" value="1"/>
</dbReference>
<dbReference type="Gene3D" id="3.60.20.10">
    <property type="entry name" value="Glutamine Phosphoribosylpyrophosphate, subunit 1, domain 1"/>
    <property type="match status" value="1"/>
</dbReference>
<dbReference type="HAMAP" id="MF_00248">
    <property type="entry name" value="HslV"/>
    <property type="match status" value="1"/>
</dbReference>
<dbReference type="InterPro" id="IPR022281">
    <property type="entry name" value="ATP-dep_Prtase_HsIV_su"/>
</dbReference>
<dbReference type="InterPro" id="IPR029055">
    <property type="entry name" value="Ntn_hydrolases_N"/>
</dbReference>
<dbReference type="InterPro" id="IPR001353">
    <property type="entry name" value="Proteasome_sua/b"/>
</dbReference>
<dbReference type="InterPro" id="IPR023333">
    <property type="entry name" value="Proteasome_suB-type"/>
</dbReference>
<dbReference type="NCBIfam" id="TIGR03692">
    <property type="entry name" value="ATP_dep_HslV"/>
    <property type="match status" value="1"/>
</dbReference>
<dbReference type="NCBIfam" id="NF003964">
    <property type="entry name" value="PRK05456.1"/>
    <property type="match status" value="1"/>
</dbReference>
<dbReference type="PANTHER" id="PTHR32194:SF7">
    <property type="entry name" value="ATP-DEPENDENT PROTEASE SUBUNIT HSLV"/>
    <property type="match status" value="1"/>
</dbReference>
<dbReference type="PANTHER" id="PTHR32194">
    <property type="entry name" value="METALLOPROTEASE TLDD"/>
    <property type="match status" value="1"/>
</dbReference>
<dbReference type="Pfam" id="PF00227">
    <property type="entry name" value="Proteasome"/>
    <property type="match status" value="1"/>
</dbReference>
<dbReference type="PIRSF" id="PIRSF039093">
    <property type="entry name" value="HslV"/>
    <property type="match status" value="1"/>
</dbReference>
<dbReference type="SUPFAM" id="SSF56235">
    <property type="entry name" value="N-terminal nucleophile aminohydrolases (Ntn hydrolases)"/>
    <property type="match status" value="1"/>
</dbReference>
<dbReference type="PROSITE" id="PS51476">
    <property type="entry name" value="PROTEASOME_BETA_2"/>
    <property type="match status" value="1"/>
</dbReference>
<sequence length="184" mass="19845">MIQHDNNKMYGTTILSIRKDKSVVVIGDGQVSLGHTVIKSGAKKVRRLSGDSVIAGFAGATADAFTLFERLESKLDKHPGQLMRACVELAKDWRMDKYLRKLEAMMIVADKSISLVITGTGDVLEPEDGVAAIGSGGNFALSAARALIDIKGISIEEIAKKAMKIAGDICVYTNHNVVIEKIEE</sequence>
<name>HSLV_WOLPM</name>
<comment type="function">
    <text evidence="1">Protease subunit of a proteasome-like degradation complex believed to be a general protein degrading machinery.</text>
</comment>
<comment type="catalytic activity">
    <reaction evidence="1">
        <text>ATP-dependent cleavage of peptide bonds with broad specificity.</text>
        <dbReference type="EC" id="3.4.25.2"/>
    </reaction>
</comment>
<comment type="activity regulation">
    <text evidence="1">Allosterically activated by HslU binding.</text>
</comment>
<comment type="subunit">
    <text evidence="1">A double ring-shaped homohexamer of HslV is capped on each side by a ring-shaped HslU homohexamer. The assembly of the HslU/HslV complex is dependent on binding of ATP.</text>
</comment>
<comment type="subcellular location">
    <subcellularLocation>
        <location evidence="1">Cytoplasm</location>
    </subcellularLocation>
</comment>
<comment type="similarity">
    <text evidence="1">Belongs to the peptidase T1B family. HslV subfamily.</text>
</comment>
<reference key="1">
    <citation type="journal article" date="2004" name="PLoS Biol.">
        <title>Phylogenomics of the reproductive parasite Wolbachia pipientis wMel: a streamlined genome overrun by mobile genetic elements.</title>
        <authorList>
            <person name="Wu M."/>
            <person name="Sun L.V."/>
            <person name="Vamathevan J.J."/>
            <person name="Riegler M."/>
            <person name="DeBoy R.T."/>
            <person name="Brownlie J.C."/>
            <person name="McGraw E.A."/>
            <person name="Martin W."/>
            <person name="Esser C."/>
            <person name="Ahmadinejad N."/>
            <person name="Wiegand C."/>
            <person name="Madupu R."/>
            <person name="Beanan M.J."/>
            <person name="Brinkac L.M."/>
            <person name="Daugherty S.C."/>
            <person name="Durkin A.S."/>
            <person name="Kolonay J.F."/>
            <person name="Nelson W.C."/>
            <person name="Mohamoud Y."/>
            <person name="Lee P."/>
            <person name="Berry K.J."/>
            <person name="Young M.B."/>
            <person name="Utterback T.R."/>
            <person name="Weidman J.F."/>
            <person name="Nierman W.C."/>
            <person name="Paulsen I.T."/>
            <person name="Nelson K.E."/>
            <person name="Tettelin H."/>
            <person name="O'Neill S.L."/>
            <person name="Eisen J.A."/>
        </authorList>
    </citation>
    <scope>NUCLEOTIDE SEQUENCE [LARGE SCALE GENOMIC DNA]</scope>
</reference>
<proteinExistence type="inferred from homology"/>
<accession>P61479</accession>